<sequence>MTSSRVENSSSRAARKVKLALMGPAFVAAIGYIDPGNFATNIQAGASFGYQLLWVVVWANLMAMLIQVLSAKLGIATGKNLAEQIRDHYPRPVVWFYWVQAEIIAMATDLAEFIGAAIGFKLVLGVSLLQGAVLTGVATFLILMLQRRGQKPLEKVIGGLLLFVAVAYVVELIFSQPALAPLTKGLVIPTLPNGEAVFLAAGVLGATIMPHVIYLHSSLTQHLHGGTRKERYNATRWDVAIAMTIAGFVNLAMMATAAAAFHFNGHTGVADLDQAYMTLEPLLSHAAATIFGLSLIAAGLSSTVVGTLAGQVVMQGFIRFHIPLWFRRAITMLPSFVVILLGLDPTRILVMSQVLLSFGIALALVPLLIFTSNAKLMGDLVNTRWVRGIGWAIVAIVVSLNGWLIVGSLLGVD</sequence>
<evidence type="ECO:0000255" key="1">
    <source>
        <dbReference type="HAMAP-Rule" id="MF_00221"/>
    </source>
</evidence>
<keyword id="KW-0997">Cell inner membrane</keyword>
<keyword id="KW-1003">Cell membrane</keyword>
<keyword id="KW-0406">Ion transport</keyword>
<keyword id="KW-0472">Membrane</keyword>
<keyword id="KW-0769">Symport</keyword>
<keyword id="KW-0812">Transmembrane</keyword>
<keyword id="KW-1133">Transmembrane helix</keyword>
<keyword id="KW-0813">Transport</keyword>
<comment type="function">
    <text evidence="1">H(+)-stimulated, divalent metal cation uptake system.</text>
</comment>
<comment type="subcellular location">
    <subcellularLocation>
        <location evidence="1">Cell inner membrane</location>
        <topology evidence="1">Multi-pass membrane protein</topology>
    </subcellularLocation>
</comment>
<comment type="similarity">
    <text evidence="1">Belongs to the NRAMP family.</text>
</comment>
<feature type="chain" id="PRO_1000024104" description="Divalent metal cation transporter MntH">
    <location>
        <begin position="1"/>
        <end position="413"/>
    </location>
</feature>
<feature type="transmembrane region" description="Helical" evidence="1">
    <location>
        <begin position="19"/>
        <end position="39"/>
    </location>
</feature>
<feature type="transmembrane region" description="Helical" evidence="1">
    <location>
        <begin position="46"/>
        <end position="66"/>
    </location>
</feature>
<feature type="transmembrane region" description="Helical" evidence="1">
    <location>
        <begin position="94"/>
        <end position="114"/>
    </location>
</feature>
<feature type="transmembrane region" description="Helical" evidence="1">
    <location>
        <begin position="122"/>
        <end position="142"/>
    </location>
</feature>
<feature type="transmembrane region" description="Helical" evidence="1">
    <location>
        <begin position="156"/>
        <end position="176"/>
    </location>
</feature>
<feature type="transmembrane region" description="Helical" evidence="1">
    <location>
        <begin position="196"/>
        <end position="216"/>
    </location>
</feature>
<feature type="transmembrane region" description="Helical" evidence="1">
    <location>
        <begin position="241"/>
        <end position="261"/>
    </location>
</feature>
<feature type="transmembrane region" description="Helical" evidence="1">
    <location>
        <begin position="290"/>
        <end position="310"/>
    </location>
</feature>
<feature type="transmembrane region" description="Helical" evidence="1">
    <location>
        <begin position="329"/>
        <end position="349"/>
    </location>
</feature>
<feature type="transmembrane region" description="Helical" evidence="1">
    <location>
        <begin position="350"/>
        <end position="370"/>
    </location>
</feature>
<feature type="transmembrane region" description="Helical" evidence="1">
    <location>
        <begin position="389"/>
        <end position="409"/>
    </location>
</feature>
<gene>
    <name evidence="1" type="primary">mntH</name>
    <name type="ordered locus">KPN78578_26980</name>
    <name type="ORF">KPN_02743</name>
</gene>
<organism>
    <name type="scientific">Klebsiella pneumoniae subsp. pneumoniae (strain ATCC 700721 / MGH 78578)</name>
    <dbReference type="NCBI Taxonomy" id="272620"/>
    <lineage>
        <taxon>Bacteria</taxon>
        <taxon>Pseudomonadati</taxon>
        <taxon>Pseudomonadota</taxon>
        <taxon>Gammaproteobacteria</taxon>
        <taxon>Enterobacterales</taxon>
        <taxon>Enterobacteriaceae</taxon>
        <taxon>Klebsiella/Raoultella group</taxon>
        <taxon>Klebsiella</taxon>
        <taxon>Klebsiella pneumoniae complex</taxon>
    </lineage>
</organism>
<accession>A6TC38</accession>
<dbReference type="EMBL" id="CP000647">
    <property type="protein sequence ID" value="ABR78159.1"/>
    <property type="molecule type" value="Genomic_DNA"/>
</dbReference>
<dbReference type="RefSeq" id="WP_002913421.1">
    <property type="nucleotide sequence ID" value="NC_009648.1"/>
</dbReference>
<dbReference type="SMR" id="A6TC38"/>
<dbReference type="STRING" id="272620.KPN_02743"/>
<dbReference type="PaxDb" id="272620-KPN_02743"/>
<dbReference type="EnsemblBacteria" id="ABR78159">
    <property type="protein sequence ID" value="ABR78159"/>
    <property type="gene ID" value="KPN_02743"/>
</dbReference>
<dbReference type="KEGG" id="kpn:KPN_02743"/>
<dbReference type="HOGENOM" id="CLU_020088_2_0_6"/>
<dbReference type="Proteomes" id="UP000000265">
    <property type="component" value="Chromosome"/>
</dbReference>
<dbReference type="GO" id="GO:0005886">
    <property type="term" value="C:plasma membrane"/>
    <property type="evidence" value="ECO:0007669"/>
    <property type="project" value="UniProtKB-SubCell"/>
</dbReference>
<dbReference type="GO" id="GO:0015086">
    <property type="term" value="F:cadmium ion transmembrane transporter activity"/>
    <property type="evidence" value="ECO:0007669"/>
    <property type="project" value="TreeGrafter"/>
</dbReference>
<dbReference type="GO" id="GO:0005384">
    <property type="term" value="F:manganese ion transmembrane transporter activity"/>
    <property type="evidence" value="ECO:0007669"/>
    <property type="project" value="TreeGrafter"/>
</dbReference>
<dbReference type="GO" id="GO:0046872">
    <property type="term" value="F:metal ion binding"/>
    <property type="evidence" value="ECO:0007669"/>
    <property type="project" value="UniProtKB-UniRule"/>
</dbReference>
<dbReference type="GO" id="GO:0015293">
    <property type="term" value="F:symporter activity"/>
    <property type="evidence" value="ECO:0007669"/>
    <property type="project" value="UniProtKB-UniRule"/>
</dbReference>
<dbReference type="GO" id="GO:0034755">
    <property type="term" value="P:iron ion transmembrane transport"/>
    <property type="evidence" value="ECO:0007669"/>
    <property type="project" value="TreeGrafter"/>
</dbReference>
<dbReference type="HAMAP" id="MF_00221">
    <property type="entry name" value="NRAMP"/>
    <property type="match status" value="1"/>
</dbReference>
<dbReference type="InterPro" id="IPR001046">
    <property type="entry name" value="NRAMP_fam"/>
</dbReference>
<dbReference type="NCBIfam" id="TIGR01197">
    <property type="entry name" value="nramp"/>
    <property type="match status" value="1"/>
</dbReference>
<dbReference type="NCBIfam" id="NF037982">
    <property type="entry name" value="Nramp_1"/>
    <property type="match status" value="1"/>
</dbReference>
<dbReference type="NCBIfam" id="NF001923">
    <property type="entry name" value="PRK00701.1"/>
    <property type="match status" value="1"/>
</dbReference>
<dbReference type="PANTHER" id="PTHR11706:SF33">
    <property type="entry name" value="NATURAL RESISTANCE-ASSOCIATED MACROPHAGE PROTEIN 2"/>
    <property type="match status" value="1"/>
</dbReference>
<dbReference type="PANTHER" id="PTHR11706">
    <property type="entry name" value="SOLUTE CARRIER PROTEIN FAMILY 11 MEMBER"/>
    <property type="match status" value="1"/>
</dbReference>
<dbReference type="Pfam" id="PF01566">
    <property type="entry name" value="Nramp"/>
    <property type="match status" value="1"/>
</dbReference>
<dbReference type="PRINTS" id="PR00447">
    <property type="entry name" value="NATRESASSCMP"/>
</dbReference>
<proteinExistence type="inferred from homology"/>
<name>MNTH_KLEP7</name>
<reference key="1">
    <citation type="submission" date="2006-09" db="EMBL/GenBank/DDBJ databases">
        <authorList>
            <consortium name="The Klebsiella pneumonia Genome Sequencing Project"/>
            <person name="McClelland M."/>
            <person name="Sanderson E.K."/>
            <person name="Spieth J."/>
            <person name="Clifton W.S."/>
            <person name="Latreille P."/>
            <person name="Sabo A."/>
            <person name="Pepin K."/>
            <person name="Bhonagiri V."/>
            <person name="Porwollik S."/>
            <person name="Ali J."/>
            <person name="Wilson R.K."/>
        </authorList>
    </citation>
    <scope>NUCLEOTIDE SEQUENCE [LARGE SCALE GENOMIC DNA]</scope>
    <source>
        <strain>ATCC 700721 / MGH 78578</strain>
    </source>
</reference>
<protein>
    <recommendedName>
        <fullName evidence="1">Divalent metal cation transporter MntH</fullName>
    </recommendedName>
</protein>